<sequence length="157" mass="17775">MARRREIPKRQVLPDPKFGDTTLTKFVNMIMVSGKKAVAEKIVYDALDVVVDRKKGGEHAVLLREALENVGPMVEVKSRRVGGATYQVPVEVRSERKTALAMRWIVEAARKRSEKGMMLRLAGELSDALENRGSAIKKKEDTHRMAEANKAFSHFRW</sequence>
<evidence type="ECO:0000255" key="1">
    <source>
        <dbReference type="HAMAP-Rule" id="MF_00480"/>
    </source>
</evidence>
<evidence type="ECO:0000305" key="2"/>
<dbReference type="EMBL" id="CP000109">
    <property type="protein sequence ID" value="ABB40887.1"/>
    <property type="molecule type" value="Genomic_DNA"/>
</dbReference>
<dbReference type="SMR" id="Q31IY6"/>
<dbReference type="STRING" id="317025.Tcr_0291"/>
<dbReference type="KEGG" id="tcx:Tcr_0291"/>
<dbReference type="eggNOG" id="COG0049">
    <property type="taxonomic scope" value="Bacteria"/>
</dbReference>
<dbReference type="HOGENOM" id="CLU_072226_1_1_6"/>
<dbReference type="OrthoDB" id="9807653at2"/>
<dbReference type="GO" id="GO:0015935">
    <property type="term" value="C:small ribosomal subunit"/>
    <property type="evidence" value="ECO:0007669"/>
    <property type="project" value="InterPro"/>
</dbReference>
<dbReference type="GO" id="GO:0019843">
    <property type="term" value="F:rRNA binding"/>
    <property type="evidence" value="ECO:0007669"/>
    <property type="project" value="UniProtKB-UniRule"/>
</dbReference>
<dbReference type="GO" id="GO:0003735">
    <property type="term" value="F:structural constituent of ribosome"/>
    <property type="evidence" value="ECO:0007669"/>
    <property type="project" value="InterPro"/>
</dbReference>
<dbReference type="GO" id="GO:0000049">
    <property type="term" value="F:tRNA binding"/>
    <property type="evidence" value="ECO:0007669"/>
    <property type="project" value="UniProtKB-UniRule"/>
</dbReference>
<dbReference type="GO" id="GO:0006412">
    <property type="term" value="P:translation"/>
    <property type="evidence" value="ECO:0007669"/>
    <property type="project" value="UniProtKB-UniRule"/>
</dbReference>
<dbReference type="CDD" id="cd14869">
    <property type="entry name" value="uS7_Bacteria"/>
    <property type="match status" value="1"/>
</dbReference>
<dbReference type="FunFam" id="1.10.455.10:FF:000001">
    <property type="entry name" value="30S ribosomal protein S7"/>
    <property type="match status" value="1"/>
</dbReference>
<dbReference type="Gene3D" id="1.10.455.10">
    <property type="entry name" value="Ribosomal protein S7 domain"/>
    <property type="match status" value="1"/>
</dbReference>
<dbReference type="HAMAP" id="MF_00480_B">
    <property type="entry name" value="Ribosomal_uS7_B"/>
    <property type="match status" value="1"/>
</dbReference>
<dbReference type="InterPro" id="IPR000235">
    <property type="entry name" value="Ribosomal_uS7"/>
</dbReference>
<dbReference type="InterPro" id="IPR005717">
    <property type="entry name" value="Ribosomal_uS7_bac/org-type"/>
</dbReference>
<dbReference type="InterPro" id="IPR020606">
    <property type="entry name" value="Ribosomal_uS7_CS"/>
</dbReference>
<dbReference type="InterPro" id="IPR023798">
    <property type="entry name" value="Ribosomal_uS7_dom"/>
</dbReference>
<dbReference type="InterPro" id="IPR036823">
    <property type="entry name" value="Ribosomal_uS7_dom_sf"/>
</dbReference>
<dbReference type="NCBIfam" id="TIGR01029">
    <property type="entry name" value="rpsG_bact"/>
    <property type="match status" value="1"/>
</dbReference>
<dbReference type="PANTHER" id="PTHR11205">
    <property type="entry name" value="RIBOSOMAL PROTEIN S7"/>
    <property type="match status" value="1"/>
</dbReference>
<dbReference type="Pfam" id="PF00177">
    <property type="entry name" value="Ribosomal_S7"/>
    <property type="match status" value="1"/>
</dbReference>
<dbReference type="PIRSF" id="PIRSF002122">
    <property type="entry name" value="RPS7p_RPS7a_RPS5e_RPS7o"/>
    <property type="match status" value="1"/>
</dbReference>
<dbReference type="SUPFAM" id="SSF47973">
    <property type="entry name" value="Ribosomal protein S7"/>
    <property type="match status" value="1"/>
</dbReference>
<dbReference type="PROSITE" id="PS00052">
    <property type="entry name" value="RIBOSOMAL_S7"/>
    <property type="match status" value="1"/>
</dbReference>
<keyword id="KW-0687">Ribonucleoprotein</keyword>
<keyword id="KW-0689">Ribosomal protein</keyword>
<keyword id="KW-0694">RNA-binding</keyword>
<keyword id="KW-0699">rRNA-binding</keyword>
<keyword id="KW-0820">tRNA-binding</keyword>
<proteinExistence type="inferred from homology"/>
<organism>
    <name type="scientific">Hydrogenovibrio crunogenus (strain DSM 25203 / XCL-2)</name>
    <name type="common">Thiomicrospira crunogena</name>
    <dbReference type="NCBI Taxonomy" id="317025"/>
    <lineage>
        <taxon>Bacteria</taxon>
        <taxon>Pseudomonadati</taxon>
        <taxon>Pseudomonadota</taxon>
        <taxon>Gammaproteobacteria</taxon>
        <taxon>Thiotrichales</taxon>
        <taxon>Piscirickettsiaceae</taxon>
        <taxon>Hydrogenovibrio</taxon>
    </lineage>
</organism>
<gene>
    <name evidence="1" type="primary">rpsG</name>
    <name type="ordered locus">Tcr_0291</name>
</gene>
<protein>
    <recommendedName>
        <fullName evidence="1">Small ribosomal subunit protein uS7</fullName>
    </recommendedName>
    <alternativeName>
        <fullName evidence="2">30S ribosomal protein S7</fullName>
    </alternativeName>
</protein>
<accession>Q31IY6</accession>
<name>RS7_HYDCU</name>
<reference key="1">
    <citation type="journal article" date="2006" name="PLoS Biol.">
        <title>The genome of deep-sea vent chemolithoautotroph Thiomicrospira crunogena XCL-2.</title>
        <authorList>
            <person name="Scott K.M."/>
            <person name="Sievert S.M."/>
            <person name="Abril F.N."/>
            <person name="Ball L.A."/>
            <person name="Barrett C.J."/>
            <person name="Blake R.A."/>
            <person name="Boller A.J."/>
            <person name="Chain P.S.G."/>
            <person name="Clark J.A."/>
            <person name="Davis C.R."/>
            <person name="Detter C."/>
            <person name="Do K.F."/>
            <person name="Dobrinski K.P."/>
            <person name="Faza B.I."/>
            <person name="Fitzpatrick K.A."/>
            <person name="Freyermuth S.K."/>
            <person name="Harmer T.L."/>
            <person name="Hauser L.J."/>
            <person name="Huegler M."/>
            <person name="Kerfeld C.A."/>
            <person name="Klotz M.G."/>
            <person name="Kong W.W."/>
            <person name="Land M."/>
            <person name="Lapidus A."/>
            <person name="Larimer F.W."/>
            <person name="Longo D.L."/>
            <person name="Lucas S."/>
            <person name="Malfatti S.A."/>
            <person name="Massey S.E."/>
            <person name="Martin D.D."/>
            <person name="McCuddin Z."/>
            <person name="Meyer F."/>
            <person name="Moore J.L."/>
            <person name="Ocampo L.H. Jr."/>
            <person name="Paul J.H."/>
            <person name="Paulsen I.T."/>
            <person name="Reep D.K."/>
            <person name="Ren Q."/>
            <person name="Ross R.L."/>
            <person name="Sato P.Y."/>
            <person name="Thomas P."/>
            <person name="Tinkham L.E."/>
            <person name="Zeruth G.T."/>
        </authorList>
    </citation>
    <scope>NUCLEOTIDE SEQUENCE [LARGE SCALE GENOMIC DNA]</scope>
    <source>
        <strain>DSM 25203 / XCL-2</strain>
    </source>
</reference>
<comment type="function">
    <text evidence="1">One of the primary rRNA binding proteins, it binds directly to 16S rRNA where it nucleates assembly of the head domain of the 30S subunit. Is located at the subunit interface close to the decoding center, probably blocks exit of the E-site tRNA.</text>
</comment>
<comment type="subunit">
    <text evidence="1">Part of the 30S ribosomal subunit. Contacts proteins S9 and S11.</text>
</comment>
<comment type="similarity">
    <text evidence="1">Belongs to the universal ribosomal protein uS7 family.</text>
</comment>
<feature type="chain" id="PRO_0000241785" description="Small ribosomal subunit protein uS7">
    <location>
        <begin position="1"/>
        <end position="157"/>
    </location>
</feature>